<keyword id="KW-0030">Aminoacyl-tRNA synthetase</keyword>
<keyword id="KW-0067">ATP-binding</keyword>
<keyword id="KW-0963">Cytoplasm</keyword>
<keyword id="KW-0436">Ligase</keyword>
<keyword id="KW-0479">Metal-binding</keyword>
<keyword id="KW-0547">Nucleotide-binding</keyword>
<keyword id="KW-0648">Protein biosynthesis</keyword>
<keyword id="KW-1185">Reference proteome</keyword>
<keyword id="KW-0694">RNA-binding</keyword>
<keyword id="KW-0820">tRNA-binding</keyword>
<keyword id="KW-0862">Zinc</keyword>
<proteinExistence type="inferred from homology"/>
<gene>
    <name evidence="1" type="primary">alaS</name>
    <name type="ordered locus">Amuc_1383</name>
</gene>
<sequence>MMTATEIRQSFLDFFREKQHTVVPSASLMPQSPGLLFTNAGMNQFVPYFLGVWTPPWTPARATDTQKCIRAGGKHNDLEDVGYDSYHHTFFEMLGNWSFGDYFKREAIRWAWELVVERWGFPAERLYATVYAPDKSKGDPGEFDREAWDFWAELFRSRGLDPDVHIVHGNVKDNFWMMGETGPCGPCSELHVDLTPEGNTKGSLVNKDSDQCIEIWNLVFIQYNAESDGSMRNLPACHVDTGMGFERACSIMQCTNGFKDFSRKPSNYATDVFRPLFDRLEVLSGRKYADVYPAPGSKRVDAEDGTLQEAIAFRVIADHLRTLSFSIADGILPGNNGRNYVLRRILRRAVRYGRRLGFTQPFLAELVDTLVESFGQVFPELAARATTVKEVLNREEASFNETLDRGLELFDAETASAGKVSGEFAFKLYDTYGFPIDLTALLAEERGLDIDMERFNRLMEEQRERARAARKSEVVRALDLKTDAVTEFTGYDVDECAATVLEVSRQGDSLFIITDKTPFYAEMGGQVSDAGLIEIGGESYHVMAVQQIGNARAHVVEARPGLEVKPGDRVHLSIDAERRRRIEAHHTATHLLHCALHQVVSPDAAQQGSFVSEDRLRFDFNSSAVSPDQLRLIEEKVNGWIEESLPVHCTERAYADVKGNAAIAQFFGDKYGDVVRVVQVGGCRDGLDGVSMEFCGGTHIANTKNIGLFKIKSEGAIASGVRRIEAMTGDAALEMIRQHVVAKSLEIAKAVEKIKEVNYELADMGLEQVPVPTIEGKPGLTALGASDIRTVNDSLARFDASVEHFKQTALDAEKKLKKARAGQSAAKADALLNEWLSDAPSSLIQVAEGAGELLQELLNGLKKRQYAGAAFLLCVDSSSLLLGAYCGKDAIADGLSAGDMIREVAALAGGKGGGRADQARGSAPQDADPQALAAAARNIING</sequence>
<dbReference type="EC" id="6.1.1.7" evidence="1"/>
<dbReference type="EMBL" id="CP001071">
    <property type="protein sequence ID" value="ACD05207.1"/>
    <property type="molecule type" value="Genomic_DNA"/>
</dbReference>
<dbReference type="RefSeq" id="WP_012420422.1">
    <property type="nucleotide sequence ID" value="NC_010655.1"/>
</dbReference>
<dbReference type="SMR" id="B2UKT4"/>
<dbReference type="STRING" id="349741.Amuc_1383"/>
<dbReference type="PaxDb" id="349741-Amuc_1383"/>
<dbReference type="KEGG" id="amu:Amuc_1383"/>
<dbReference type="eggNOG" id="COG0013">
    <property type="taxonomic scope" value="Bacteria"/>
</dbReference>
<dbReference type="HOGENOM" id="CLU_004485_1_1_0"/>
<dbReference type="OrthoDB" id="9803884at2"/>
<dbReference type="BioCyc" id="AMUC349741:G1GBX-1469-MONOMER"/>
<dbReference type="Proteomes" id="UP000001031">
    <property type="component" value="Chromosome"/>
</dbReference>
<dbReference type="GO" id="GO:0005737">
    <property type="term" value="C:cytoplasm"/>
    <property type="evidence" value="ECO:0007669"/>
    <property type="project" value="UniProtKB-SubCell"/>
</dbReference>
<dbReference type="GO" id="GO:0004813">
    <property type="term" value="F:alanine-tRNA ligase activity"/>
    <property type="evidence" value="ECO:0007669"/>
    <property type="project" value="UniProtKB-UniRule"/>
</dbReference>
<dbReference type="GO" id="GO:0002161">
    <property type="term" value="F:aminoacyl-tRNA deacylase activity"/>
    <property type="evidence" value="ECO:0007669"/>
    <property type="project" value="TreeGrafter"/>
</dbReference>
<dbReference type="GO" id="GO:0005524">
    <property type="term" value="F:ATP binding"/>
    <property type="evidence" value="ECO:0007669"/>
    <property type="project" value="UniProtKB-UniRule"/>
</dbReference>
<dbReference type="GO" id="GO:0000049">
    <property type="term" value="F:tRNA binding"/>
    <property type="evidence" value="ECO:0007669"/>
    <property type="project" value="UniProtKB-KW"/>
</dbReference>
<dbReference type="GO" id="GO:0008270">
    <property type="term" value="F:zinc ion binding"/>
    <property type="evidence" value="ECO:0007669"/>
    <property type="project" value="UniProtKB-UniRule"/>
</dbReference>
<dbReference type="GO" id="GO:0006419">
    <property type="term" value="P:alanyl-tRNA aminoacylation"/>
    <property type="evidence" value="ECO:0007669"/>
    <property type="project" value="UniProtKB-UniRule"/>
</dbReference>
<dbReference type="CDD" id="cd00673">
    <property type="entry name" value="AlaRS_core"/>
    <property type="match status" value="1"/>
</dbReference>
<dbReference type="FunFam" id="3.10.310.40:FF:000001">
    <property type="entry name" value="Alanine--tRNA ligase"/>
    <property type="match status" value="1"/>
</dbReference>
<dbReference type="FunFam" id="3.30.930.10:FF:000011">
    <property type="entry name" value="Alanine--tRNA ligase, cytoplasmic"/>
    <property type="match status" value="1"/>
</dbReference>
<dbReference type="FunFam" id="3.30.980.10:FF:000004">
    <property type="entry name" value="Alanine--tRNA ligase, cytoplasmic"/>
    <property type="match status" value="1"/>
</dbReference>
<dbReference type="Gene3D" id="2.40.30.130">
    <property type="match status" value="1"/>
</dbReference>
<dbReference type="Gene3D" id="3.10.310.40">
    <property type="match status" value="1"/>
</dbReference>
<dbReference type="Gene3D" id="3.30.930.10">
    <property type="entry name" value="Bira Bifunctional Protein, Domain 2"/>
    <property type="match status" value="1"/>
</dbReference>
<dbReference type="Gene3D" id="3.30.980.10">
    <property type="entry name" value="Threonyl-trna Synthetase, Chain A, domain 2"/>
    <property type="match status" value="1"/>
</dbReference>
<dbReference type="HAMAP" id="MF_00036_B">
    <property type="entry name" value="Ala_tRNA_synth_B"/>
    <property type="match status" value="1"/>
</dbReference>
<dbReference type="InterPro" id="IPR045864">
    <property type="entry name" value="aa-tRNA-synth_II/BPL/LPL"/>
</dbReference>
<dbReference type="InterPro" id="IPR002318">
    <property type="entry name" value="Ala-tRNA-lgiase_IIc"/>
</dbReference>
<dbReference type="InterPro" id="IPR018162">
    <property type="entry name" value="Ala-tRNA-ligase_IIc_anticod-bd"/>
</dbReference>
<dbReference type="InterPro" id="IPR018165">
    <property type="entry name" value="Ala-tRNA-synth_IIc_core"/>
</dbReference>
<dbReference type="InterPro" id="IPR018164">
    <property type="entry name" value="Ala-tRNA-synth_IIc_N"/>
</dbReference>
<dbReference type="InterPro" id="IPR050058">
    <property type="entry name" value="Ala-tRNA_ligase"/>
</dbReference>
<dbReference type="InterPro" id="IPR023033">
    <property type="entry name" value="Ala_tRNA_ligase_euk/bac"/>
</dbReference>
<dbReference type="InterPro" id="IPR018163">
    <property type="entry name" value="Thr/Ala-tRNA-synth_IIc_edit"/>
</dbReference>
<dbReference type="InterPro" id="IPR009000">
    <property type="entry name" value="Transl_B-barrel_sf"/>
</dbReference>
<dbReference type="InterPro" id="IPR012947">
    <property type="entry name" value="tRNA_SAD"/>
</dbReference>
<dbReference type="NCBIfam" id="TIGR00344">
    <property type="entry name" value="alaS"/>
    <property type="match status" value="1"/>
</dbReference>
<dbReference type="PANTHER" id="PTHR11777:SF9">
    <property type="entry name" value="ALANINE--TRNA LIGASE, CYTOPLASMIC"/>
    <property type="match status" value="1"/>
</dbReference>
<dbReference type="PANTHER" id="PTHR11777">
    <property type="entry name" value="ALANYL-TRNA SYNTHETASE"/>
    <property type="match status" value="1"/>
</dbReference>
<dbReference type="Pfam" id="PF01411">
    <property type="entry name" value="tRNA-synt_2c"/>
    <property type="match status" value="1"/>
</dbReference>
<dbReference type="Pfam" id="PF07973">
    <property type="entry name" value="tRNA_SAD"/>
    <property type="match status" value="1"/>
</dbReference>
<dbReference type="PRINTS" id="PR00980">
    <property type="entry name" value="TRNASYNTHALA"/>
</dbReference>
<dbReference type="SMART" id="SM00863">
    <property type="entry name" value="tRNA_SAD"/>
    <property type="match status" value="1"/>
</dbReference>
<dbReference type="SUPFAM" id="SSF55681">
    <property type="entry name" value="Class II aaRS and biotin synthetases"/>
    <property type="match status" value="1"/>
</dbReference>
<dbReference type="SUPFAM" id="SSF101353">
    <property type="entry name" value="Putative anticodon-binding domain of alanyl-tRNA synthetase (AlaRS)"/>
    <property type="match status" value="1"/>
</dbReference>
<dbReference type="SUPFAM" id="SSF55186">
    <property type="entry name" value="ThrRS/AlaRS common domain"/>
    <property type="match status" value="1"/>
</dbReference>
<dbReference type="SUPFAM" id="SSF50447">
    <property type="entry name" value="Translation proteins"/>
    <property type="match status" value="1"/>
</dbReference>
<dbReference type="PROSITE" id="PS50860">
    <property type="entry name" value="AA_TRNA_LIGASE_II_ALA"/>
    <property type="match status" value="1"/>
</dbReference>
<organism>
    <name type="scientific">Akkermansia muciniphila (strain ATCC BAA-835 / DSM 22959 / JCM 33894 / BCRC 81048 / CCUG 64013 / CIP 107961 / Muc)</name>
    <dbReference type="NCBI Taxonomy" id="349741"/>
    <lineage>
        <taxon>Bacteria</taxon>
        <taxon>Pseudomonadati</taxon>
        <taxon>Verrucomicrobiota</taxon>
        <taxon>Verrucomicrobiia</taxon>
        <taxon>Verrucomicrobiales</taxon>
        <taxon>Akkermansiaceae</taxon>
        <taxon>Akkermansia</taxon>
    </lineage>
</organism>
<reference key="1">
    <citation type="journal article" date="2011" name="PLoS ONE">
        <title>The genome of Akkermansia muciniphila, a dedicated intestinal mucin degrader, and its use in exploring intestinal metagenomes.</title>
        <authorList>
            <person name="van Passel M.W."/>
            <person name="Kant R."/>
            <person name="Zoetendal E.G."/>
            <person name="Plugge C.M."/>
            <person name="Derrien M."/>
            <person name="Malfatti S.A."/>
            <person name="Chain P.S."/>
            <person name="Woyke T."/>
            <person name="Palva A."/>
            <person name="de Vos W.M."/>
            <person name="Smidt H."/>
        </authorList>
    </citation>
    <scope>NUCLEOTIDE SEQUENCE [LARGE SCALE GENOMIC DNA]</scope>
    <source>
        <strain>ATCC BAA-835 / DSM 22959 / JCM 33894 / BCRC 81048 / CCUG 64013 / CIP 107961 / Muc</strain>
    </source>
</reference>
<comment type="function">
    <text evidence="1">Catalyzes the attachment of alanine to tRNA(Ala) in a two-step reaction: alanine is first activated by ATP to form Ala-AMP and then transferred to the acceptor end of tRNA(Ala). Also edits incorrectly charged Ser-tRNA(Ala) and Gly-tRNA(Ala) via its editing domain.</text>
</comment>
<comment type="catalytic activity">
    <reaction evidence="1">
        <text>tRNA(Ala) + L-alanine + ATP = L-alanyl-tRNA(Ala) + AMP + diphosphate</text>
        <dbReference type="Rhea" id="RHEA:12540"/>
        <dbReference type="Rhea" id="RHEA-COMP:9657"/>
        <dbReference type="Rhea" id="RHEA-COMP:9923"/>
        <dbReference type="ChEBI" id="CHEBI:30616"/>
        <dbReference type="ChEBI" id="CHEBI:33019"/>
        <dbReference type="ChEBI" id="CHEBI:57972"/>
        <dbReference type="ChEBI" id="CHEBI:78442"/>
        <dbReference type="ChEBI" id="CHEBI:78497"/>
        <dbReference type="ChEBI" id="CHEBI:456215"/>
        <dbReference type="EC" id="6.1.1.7"/>
    </reaction>
</comment>
<comment type="cofactor">
    <cofactor evidence="1">
        <name>Zn(2+)</name>
        <dbReference type="ChEBI" id="CHEBI:29105"/>
    </cofactor>
    <text evidence="1">Binds 1 zinc ion per subunit.</text>
</comment>
<comment type="subcellular location">
    <subcellularLocation>
        <location evidence="1">Cytoplasm</location>
    </subcellularLocation>
</comment>
<comment type="domain">
    <text evidence="1">Consists of three domains; the N-terminal catalytic domain, the editing domain and the C-terminal C-Ala domain. The editing domain removes incorrectly charged amino acids, while the C-Ala domain, along with tRNA(Ala), serves as a bridge to cooperatively bring together the editing and aminoacylation centers thus stimulating deacylation of misacylated tRNAs.</text>
</comment>
<comment type="similarity">
    <text evidence="1">Belongs to the class-II aminoacyl-tRNA synthetase family.</text>
</comment>
<evidence type="ECO:0000255" key="1">
    <source>
        <dbReference type="HAMAP-Rule" id="MF_00036"/>
    </source>
</evidence>
<protein>
    <recommendedName>
        <fullName evidence="1">Alanine--tRNA ligase</fullName>
        <ecNumber evidence="1">6.1.1.7</ecNumber>
    </recommendedName>
    <alternativeName>
        <fullName evidence="1">Alanyl-tRNA synthetase</fullName>
        <shortName evidence="1">AlaRS</shortName>
    </alternativeName>
</protein>
<accession>B2UKT4</accession>
<name>SYA_AKKM8</name>
<feature type="chain" id="PRO_0000347482" description="Alanine--tRNA ligase">
    <location>
        <begin position="1"/>
        <end position="942"/>
    </location>
</feature>
<feature type="binding site" evidence="1">
    <location>
        <position position="586"/>
    </location>
    <ligand>
        <name>Zn(2+)</name>
        <dbReference type="ChEBI" id="CHEBI:29105"/>
    </ligand>
</feature>
<feature type="binding site" evidence="1">
    <location>
        <position position="590"/>
    </location>
    <ligand>
        <name>Zn(2+)</name>
        <dbReference type="ChEBI" id="CHEBI:29105"/>
    </ligand>
</feature>
<feature type="binding site" evidence="1">
    <location>
        <position position="695"/>
    </location>
    <ligand>
        <name>Zn(2+)</name>
        <dbReference type="ChEBI" id="CHEBI:29105"/>
    </ligand>
</feature>
<feature type="binding site" evidence="1">
    <location>
        <position position="699"/>
    </location>
    <ligand>
        <name>Zn(2+)</name>
        <dbReference type="ChEBI" id="CHEBI:29105"/>
    </ligand>
</feature>